<reference key="1">
    <citation type="journal article" date="1997" name="Nature">
        <title>Molecular basis of symbiosis between Rhizobium and legumes.</title>
        <authorList>
            <person name="Freiberg C.A."/>
            <person name="Fellay R."/>
            <person name="Bairoch A."/>
            <person name="Broughton W.J."/>
            <person name="Rosenthal A."/>
            <person name="Perret X."/>
        </authorList>
    </citation>
    <scope>NUCLEOTIDE SEQUENCE [LARGE SCALE GENOMIC DNA]</scope>
    <source>
        <strain>NBRC 101917 / NGR234</strain>
    </source>
</reference>
<reference key="2">
    <citation type="journal article" date="2009" name="Appl. Environ. Microbiol.">
        <title>Rhizobium sp. strain NGR234 possesses a remarkable number of secretion systems.</title>
        <authorList>
            <person name="Schmeisser C."/>
            <person name="Liesegang H."/>
            <person name="Krysciak D."/>
            <person name="Bakkou N."/>
            <person name="Le Quere A."/>
            <person name="Wollherr A."/>
            <person name="Heinemeyer I."/>
            <person name="Morgenstern B."/>
            <person name="Pommerening-Roeser A."/>
            <person name="Flores M."/>
            <person name="Palacios R."/>
            <person name="Brenner S."/>
            <person name="Gottschalk G."/>
            <person name="Schmitz R.A."/>
            <person name="Broughton W.J."/>
            <person name="Perret X."/>
            <person name="Strittmatter A.W."/>
            <person name="Streit W.R."/>
        </authorList>
    </citation>
    <scope>NUCLEOTIDE SEQUENCE [LARGE SCALE GENOMIC DNA]</scope>
    <source>
        <strain>NBRC 101917 / NGR234</strain>
    </source>
</reference>
<feature type="chain" id="PRO_0000200913" description="Uncharacterized protein y4mG">
    <location>
        <begin position="1"/>
        <end position="73"/>
    </location>
</feature>
<dbReference type="EMBL" id="U00090">
    <property type="protein sequence ID" value="AAB91770.1"/>
    <property type="molecule type" value="Genomic_DNA"/>
</dbReference>
<dbReference type="RefSeq" id="NP_443973.1">
    <property type="nucleotide sequence ID" value="NC_000914.2"/>
</dbReference>
<dbReference type="KEGG" id="rhi:NGR_a02520"/>
<dbReference type="PATRIC" id="fig|394.7.peg.262"/>
<dbReference type="HOGENOM" id="CLU_2702294_0_0_5"/>
<dbReference type="OrthoDB" id="9799147at2"/>
<dbReference type="Proteomes" id="UP000001054">
    <property type="component" value="Plasmid pNGR234a"/>
</dbReference>
<organism>
    <name type="scientific">Sinorhizobium fredii (strain NBRC 101917 / NGR234)</name>
    <dbReference type="NCBI Taxonomy" id="394"/>
    <lineage>
        <taxon>Bacteria</taxon>
        <taxon>Pseudomonadati</taxon>
        <taxon>Pseudomonadota</taxon>
        <taxon>Alphaproteobacteria</taxon>
        <taxon>Hyphomicrobiales</taxon>
        <taxon>Rhizobiaceae</taxon>
        <taxon>Sinorhizobium/Ensifer group</taxon>
        <taxon>Sinorhizobium</taxon>
    </lineage>
</organism>
<sequence length="73" mass="7750">MPEVSERRAEEALLVAHFVACEGNRVIAYCALASGAVKQPKRLAVSGAICLTRFRVPSSAASQSTLLLGSRHP</sequence>
<accession>P55566</accession>
<gene>
    <name type="ordered locus">NGR_a02520</name>
    <name type="ORF">y4mG</name>
</gene>
<proteinExistence type="predicted"/>
<geneLocation type="plasmid">
    <name>sym pNGR234a</name>
</geneLocation>
<protein>
    <recommendedName>
        <fullName>Uncharacterized protein y4mG</fullName>
    </recommendedName>
</protein>
<keyword id="KW-0614">Plasmid</keyword>
<keyword id="KW-1185">Reference proteome</keyword>
<name>Y4MG_SINFN</name>